<gene>
    <name evidence="1" type="primary">v</name>
    <name type="ORF">GI16256</name>
</gene>
<dbReference type="EC" id="1.13.11.11" evidence="1"/>
<dbReference type="EMBL" id="CH933812">
    <property type="protein sequence ID" value="EDW05825.1"/>
    <property type="molecule type" value="Genomic_DNA"/>
</dbReference>
<dbReference type="SMR" id="B4L629"/>
<dbReference type="FunCoup" id="B4L629">
    <property type="interactions" value="149"/>
</dbReference>
<dbReference type="EnsemblMetazoa" id="FBtr0166981">
    <property type="protein sequence ID" value="FBpp0165473"/>
    <property type="gene ID" value="FBgn0139005"/>
</dbReference>
<dbReference type="EnsemblMetazoa" id="XM_002010947.4">
    <property type="protein sequence ID" value="XP_002010983.1"/>
    <property type="gene ID" value="LOC6585351"/>
</dbReference>
<dbReference type="GeneID" id="6585351"/>
<dbReference type="KEGG" id="dmo:Dmoj_GI16256"/>
<dbReference type="CTD" id="136040130"/>
<dbReference type="eggNOG" id="KOG3906">
    <property type="taxonomic scope" value="Eukaryota"/>
</dbReference>
<dbReference type="HOGENOM" id="CLU_045599_1_1_1"/>
<dbReference type="InParanoid" id="B4L629"/>
<dbReference type="OMA" id="WRWRNDH"/>
<dbReference type="OrthoDB" id="447477at2759"/>
<dbReference type="PhylomeDB" id="B4L629"/>
<dbReference type="UniPathway" id="UPA00271"/>
<dbReference type="UniPathway" id="UPA00333">
    <property type="reaction ID" value="UER00453"/>
</dbReference>
<dbReference type="Proteomes" id="UP000009192">
    <property type="component" value="Unassembled WGS sequence"/>
</dbReference>
<dbReference type="GO" id="GO:0020037">
    <property type="term" value="F:heme binding"/>
    <property type="evidence" value="ECO:0000250"/>
    <property type="project" value="UniProtKB"/>
</dbReference>
<dbReference type="GO" id="GO:0046872">
    <property type="term" value="F:metal ion binding"/>
    <property type="evidence" value="ECO:0007669"/>
    <property type="project" value="UniProtKB-KW"/>
</dbReference>
<dbReference type="GO" id="GO:0004833">
    <property type="term" value="F:tryptophan 2,3-dioxygenase activity"/>
    <property type="evidence" value="ECO:0000250"/>
    <property type="project" value="UniProtKB"/>
</dbReference>
<dbReference type="GO" id="GO:0019442">
    <property type="term" value="P:L-tryptophan catabolic process to acetyl-CoA"/>
    <property type="evidence" value="ECO:0007669"/>
    <property type="project" value="TreeGrafter"/>
</dbReference>
<dbReference type="GO" id="GO:0019441">
    <property type="term" value="P:L-tryptophan catabolic process to kynurenine"/>
    <property type="evidence" value="ECO:0000250"/>
    <property type="project" value="UniProtKB"/>
</dbReference>
<dbReference type="GO" id="GO:0006727">
    <property type="term" value="P:ommochrome biosynthetic process"/>
    <property type="evidence" value="ECO:0007669"/>
    <property type="project" value="UniProtKB-UniRule"/>
</dbReference>
<dbReference type="FunFam" id="1.10.287.3810:FF:000001">
    <property type="entry name" value="Tryptophan 2,3-dioxygenase"/>
    <property type="match status" value="1"/>
</dbReference>
<dbReference type="Gene3D" id="1.10.287.3810">
    <property type="match status" value="1"/>
</dbReference>
<dbReference type="Gene3D" id="1.20.58.480">
    <property type="match status" value="1"/>
</dbReference>
<dbReference type="HAMAP" id="MF_01972">
    <property type="entry name" value="T23O"/>
    <property type="match status" value="1"/>
</dbReference>
<dbReference type="InterPro" id="IPR037217">
    <property type="entry name" value="Trp/Indoleamine_2_3_dOase-like"/>
</dbReference>
<dbReference type="InterPro" id="IPR004981">
    <property type="entry name" value="Trp_2_3_dOase"/>
</dbReference>
<dbReference type="PANTHER" id="PTHR10138">
    <property type="entry name" value="TRYPTOPHAN 2,3-DIOXYGENASE"/>
    <property type="match status" value="1"/>
</dbReference>
<dbReference type="PANTHER" id="PTHR10138:SF0">
    <property type="entry name" value="TRYPTOPHAN 2,3-DIOXYGENASE"/>
    <property type="match status" value="1"/>
</dbReference>
<dbReference type="Pfam" id="PF03301">
    <property type="entry name" value="Trp_dioxygenase"/>
    <property type="match status" value="1"/>
</dbReference>
<dbReference type="SUPFAM" id="SSF140959">
    <property type="entry name" value="Indolic compounds 2,3-dioxygenase-like"/>
    <property type="match status" value="1"/>
</dbReference>
<protein>
    <recommendedName>
        <fullName evidence="1">Tryptophan 2,3-dioxygenase</fullName>
        <shortName evidence="1">TDO</shortName>
        <ecNumber evidence="1">1.13.11.11</ecNumber>
    </recommendedName>
    <alternativeName>
        <fullName evidence="1">Protein vermilion</fullName>
    </alternativeName>
    <alternativeName>
        <fullName evidence="1">Tryptamin 2,3-dioxygenase</fullName>
    </alternativeName>
    <alternativeName>
        <fullName evidence="1">Tryptophan oxygenase</fullName>
        <shortName evidence="1">TO</shortName>
        <shortName evidence="1">TRPO</shortName>
    </alternativeName>
    <alternativeName>
        <fullName evidence="1">Tryptophan pyrrolase</fullName>
    </alternativeName>
    <alternativeName>
        <fullName evidence="1">Tryptophanase</fullName>
    </alternativeName>
</protein>
<accession>B4L629</accession>
<sequence length="380" mass="44390">MSCPYASNGNEHDDGAIPLSNEVGKIYGEYLMLDKLLDAQCMLSMEDKRPVHDEHLFIITHQAYELWFKQIIFEFDSIRDMLDAEVIDETKTLEIVKRLNRVVLILKLLVDQVPILETMTPLDFMDFRKYLAPASGFQSLQFRLIENKLGVLTEQRVKYNQKYTDVFGNDKKALHAIRDSEDSPSLLTLVQRWLERTPGLEEDGFNFWAKFQQSVDQFLAAQVQSAMLEPVERAKNYRLMDIEKRREVYRSIFDPAVHDALVKRGDRRFSHRALQGAIMITFYRDEPRFSQPHQLLTLLMDIDSLITKWRYNHVIMVQRMIGSQQLGTGGSSGYQYLRSTLSDRYKVFLDLFNLSTFLIPREAIPPLDETIRRKLIHKSV</sequence>
<reference key="1">
    <citation type="journal article" date="2007" name="Nature">
        <title>Evolution of genes and genomes on the Drosophila phylogeny.</title>
        <authorList>
            <consortium name="Drosophila 12 genomes consortium"/>
        </authorList>
    </citation>
    <scope>NUCLEOTIDE SEQUENCE [LARGE SCALE GENOMIC DNA]</scope>
    <source>
        <strain>Tucson 15081-1352.22</strain>
    </source>
</reference>
<proteinExistence type="inferred from homology"/>
<keyword id="KW-0223">Dioxygenase</keyword>
<keyword id="KW-0349">Heme</keyword>
<keyword id="KW-0408">Iron</keyword>
<keyword id="KW-0479">Metal-binding</keyword>
<keyword id="KW-0560">Oxidoreductase</keyword>
<keyword id="KW-1185">Reference proteome</keyword>
<keyword id="KW-0823">Tryptophan catabolism</keyword>
<feature type="chain" id="PRO_0000360877" description="Tryptophan 2,3-dioxygenase">
    <location>
        <begin position="1"/>
        <end position="380"/>
    </location>
</feature>
<feature type="binding site" evidence="1">
    <location>
        <begin position="57"/>
        <end position="61"/>
    </location>
    <ligand>
        <name>substrate</name>
    </ligand>
</feature>
<feature type="binding site" evidence="1">
    <location>
        <position position="128"/>
    </location>
    <ligand>
        <name>substrate</name>
    </ligand>
</feature>
<feature type="binding site" description="axial binding residue" evidence="1">
    <location>
        <position position="313"/>
    </location>
    <ligand>
        <name>heme</name>
        <dbReference type="ChEBI" id="CHEBI:30413"/>
    </ligand>
    <ligandPart>
        <name>Fe</name>
        <dbReference type="ChEBI" id="CHEBI:18248"/>
    </ligandPart>
</feature>
<feature type="binding site" evidence="1">
    <location>
        <position position="328"/>
    </location>
    <ligand>
        <name>substrate</name>
    </ligand>
</feature>
<organism>
    <name type="scientific">Drosophila mojavensis</name>
    <name type="common">Fruit fly</name>
    <dbReference type="NCBI Taxonomy" id="7230"/>
    <lineage>
        <taxon>Eukaryota</taxon>
        <taxon>Metazoa</taxon>
        <taxon>Ecdysozoa</taxon>
        <taxon>Arthropoda</taxon>
        <taxon>Hexapoda</taxon>
        <taxon>Insecta</taxon>
        <taxon>Pterygota</taxon>
        <taxon>Neoptera</taxon>
        <taxon>Endopterygota</taxon>
        <taxon>Diptera</taxon>
        <taxon>Brachycera</taxon>
        <taxon>Muscomorpha</taxon>
        <taxon>Ephydroidea</taxon>
        <taxon>Drosophilidae</taxon>
        <taxon>Drosophila</taxon>
    </lineage>
</organism>
<comment type="function">
    <text evidence="1">Heme-dependent dioxygenase that catalyzes the oxidative cleavage of the L-tryptophan (L-Trp) pyrrole ring and converts L-tryptophan to N-formyl-L-kynurenine. Catalyzes the oxidative cleavage of the indole moiety.</text>
</comment>
<comment type="catalytic activity">
    <reaction evidence="1">
        <text>L-tryptophan + O2 = N-formyl-L-kynurenine</text>
        <dbReference type="Rhea" id="RHEA:24536"/>
        <dbReference type="ChEBI" id="CHEBI:15379"/>
        <dbReference type="ChEBI" id="CHEBI:57912"/>
        <dbReference type="ChEBI" id="CHEBI:58629"/>
        <dbReference type="EC" id="1.13.11.11"/>
    </reaction>
</comment>
<comment type="cofactor">
    <cofactor evidence="1">
        <name>heme</name>
        <dbReference type="ChEBI" id="CHEBI:30413"/>
    </cofactor>
    <text evidence="1">Binds 1 heme group per subunit.</text>
</comment>
<comment type="pathway">
    <text evidence="1">Amino-acid degradation; L-tryptophan degradation via kynurenine pathway; L-kynurenine from L-tryptophan: step 1/2.</text>
</comment>
<comment type="pathway">
    <text evidence="1">Pigment biosynthesis; ommochrome biosynthesis.</text>
</comment>
<comment type="subunit">
    <text evidence="1">Homotetramer. Dimer of dimers.</text>
</comment>
<comment type="similarity">
    <text evidence="1">Belongs to the tryptophan 2,3-dioxygenase family.</text>
</comment>
<name>T23O_DROMO</name>
<evidence type="ECO:0000255" key="1">
    <source>
        <dbReference type="HAMAP-Rule" id="MF_03020"/>
    </source>
</evidence>